<comment type="function">
    <text evidence="1">Converts O-phospho-L-seryl-tRNA(Cys) (Sep-tRNA(Cys)) to L-cysteinyl-tRNA(Cys) (Cys-tRNA(Cys)).</text>
</comment>
<comment type="catalytic activity">
    <reaction evidence="1">
        <text>O-phospho-L-seryl-tRNA(Cys) + hydrogen sulfide + H(+) = L-cysteinyl-tRNA(Cys) + phosphate</text>
        <dbReference type="Rhea" id="RHEA:25686"/>
        <dbReference type="Rhea" id="RHEA-COMP:9679"/>
        <dbReference type="Rhea" id="RHEA-COMP:9719"/>
        <dbReference type="ChEBI" id="CHEBI:15378"/>
        <dbReference type="ChEBI" id="CHEBI:29919"/>
        <dbReference type="ChEBI" id="CHEBI:43474"/>
        <dbReference type="ChEBI" id="CHEBI:78517"/>
        <dbReference type="ChEBI" id="CHEBI:78551"/>
        <dbReference type="EC" id="2.5.1.73"/>
    </reaction>
</comment>
<comment type="cofactor">
    <cofactor evidence="1">
        <name>pyridoxal 5'-phosphate</name>
        <dbReference type="ChEBI" id="CHEBI:597326"/>
    </cofactor>
</comment>
<comment type="subunit">
    <text evidence="1">Homodimer. Interacts with SepRS.</text>
</comment>
<comment type="similarity">
    <text evidence="1">Belongs to the SepCysS family.</text>
</comment>
<organism>
    <name type="scientific">Methanocorpusculum labreanum (strain ATCC 43576 / DSM 4855 / Z)</name>
    <dbReference type="NCBI Taxonomy" id="410358"/>
    <lineage>
        <taxon>Archaea</taxon>
        <taxon>Methanobacteriati</taxon>
        <taxon>Methanobacteriota</taxon>
        <taxon>Stenosarchaea group</taxon>
        <taxon>Methanomicrobia</taxon>
        <taxon>Methanomicrobiales</taxon>
        <taxon>Methanocorpusculaceae</taxon>
        <taxon>Methanocorpusculum</taxon>
    </lineage>
</organism>
<sequence length="392" mass="42716">MKCAGQIEARAVEESSINLDPIQAAGRLTPEAMKAVIAWGDGYSVCDNCHKPFRLDYVTKPPIADFHEEAAKWLGMDKIQLVPGARRAFQEVTGALVGKGEPVIMTGMGHYTAYLSVEVVNGVVREIRPTADHHITADAAAESIENAVREFGYAPKLVFVDAVDFMYGNMHEVEKIAKVAHQYDIPVLYNGVYTVGVLPVDGKKLGVDFVVGSGHKSMAAPAPSGILATTDEYAEIVLRTTKIQGDITGRKFGIKQVGILGCSLMGDPAVGLIASFPRVKERVNHFDEELKNHKIVTDALLSIEGTKVASEYPRKHTLTRMDTAGSFDVIARTHKKRGFFLSSALNKRGITGIMPGVTKQWKFNTYGLTKTQAEYLADSFIEIAEENSMVVG</sequence>
<gene>
    <name type="ordered locus">Mlab_1214</name>
</gene>
<dbReference type="EC" id="2.5.1.73" evidence="1"/>
<dbReference type="EMBL" id="CP000559">
    <property type="protein sequence ID" value="ABN07383.1"/>
    <property type="molecule type" value="Genomic_DNA"/>
</dbReference>
<dbReference type="RefSeq" id="WP_011833586.1">
    <property type="nucleotide sequence ID" value="NC_008942.1"/>
</dbReference>
<dbReference type="SMR" id="A2SSS7"/>
<dbReference type="STRING" id="410358.Mlab_1214"/>
<dbReference type="GeneID" id="4795713"/>
<dbReference type="KEGG" id="mla:Mlab_1214"/>
<dbReference type="eggNOG" id="arCOG00091">
    <property type="taxonomic scope" value="Archaea"/>
</dbReference>
<dbReference type="HOGENOM" id="CLU_060476_0_0_2"/>
<dbReference type="OrthoDB" id="5817at2157"/>
<dbReference type="Proteomes" id="UP000000365">
    <property type="component" value="Chromosome"/>
</dbReference>
<dbReference type="GO" id="GO:0043766">
    <property type="term" value="F:Sep-tRNA:Cys-tRNA synthase activity"/>
    <property type="evidence" value="ECO:0007669"/>
    <property type="project" value="UniProtKB-UniRule"/>
</dbReference>
<dbReference type="GO" id="GO:0006412">
    <property type="term" value="P:translation"/>
    <property type="evidence" value="ECO:0007669"/>
    <property type="project" value="UniProtKB-KW"/>
</dbReference>
<dbReference type="Gene3D" id="3.90.1150.10">
    <property type="entry name" value="Aspartate Aminotransferase, domain 1"/>
    <property type="match status" value="1"/>
</dbReference>
<dbReference type="Gene3D" id="3.40.640.10">
    <property type="entry name" value="Type I PLP-dependent aspartate aminotransferase-like (Major domain)"/>
    <property type="match status" value="1"/>
</dbReference>
<dbReference type="HAMAP" id="MF_01675">
    <property type="entry name" value="Sep_Cys_tRNA_synth"/>
    <property type="match status" value="1"/>
</dbReference>
<dbReference type="InterPro" id="IPR015424">
    <property type="entry name" value="PyrdxlP-dep_Trfase"/>
</dbReference>
<dbReference type="InterPro" id="IPR015421">
    <property type="entry name" value="PyrdxlP-dep_Trfase_major"/>
</dbReference>
<dbReference type="InterPro" id="IPR015422">
    <property type="entry name" value="PyrdxlP-dep_Trfase_small"/>
</dbReference>
<dbReference type="InterPro" id="IPR013375">
    <property type="entry name" value="Sep_Cys-tRNA_synth_arc"/>
</dbReference>
<dbReference type="InterPro" id="IPR008829">
    <property type="entry name" value="SepSecS/SepCysS"/>
</dbReference>
<dbReference type="NCBIfam" id="NF006810">
    <property type="entry name" value="PRK09331.1"/>
    <property type="match status" value="1"/>
</dbReference>
<dbReference type="PANTHER" id="PTHR43586">
    <property type="entry name" value="CYSTEINE DESULFURASE"/>
    <property type="match status" value="1"/>
</dbReference>
<dbReference type="PANTHER" id="PTHR43586:SF3">
    <property type="entry name" value="O-PHOSPHO-L-SERYL-TRNA:CYS-TRNA SYNTHASE"/>
    <property type="match status" value="1"/>
</dbReference>
<dbReference type="Pfam" id="PF05889">
    <property type="entry name" value="SepSecS"/>
    <property type="match status" value="1"/>
</dbReference>
<dbReference type="SUPFAM" id="SSF53383">
    <property type="entry name" value="PLP-dependent transferases"/>
    <property type="match status" value="1"/>
</dbReference>
<keyword id="KW-0648">Protein biosynthesis</keyword>
<keyword id="KW-0663">Pyridoxal phosphate</keyword>
<keyword id="KW-1185">Reference proteome</keyword>
<keyword id="KW-0808">Transferase</keyword>
<evidence type="ECO:0000255" key="1">
    <source>
        <dbReference type="HAMAP-Rule" id="MF_01675"/>
    </source>
</evidence>
<name>SPSS2_METLZ</name>
<accession>A2SSS7</accession>
<feature type="chain" id="PRO_0000359454" description="O-phospho-L-seryl-tRNA:Cys-tRNA synthase 2">
    <location>
        <begin position="1"/>
        <end position="392"/>
    </location>
</feature>
<feature type="binding site" evidence="1">
    <location>
        <begin position="85"/>
        <end position="86"/>
    </location>
    <ligand>
        <name>pyridoxal 5'-phosphate</name>
        <dbReference type="ChEBI" id="CHEBI:597326"/>
    </ligand>
</feature>
<feature type="binding site" evidence="1">
    <location>
        <position position="190"/>
    </location>
    <ligand>
        <name>pyridoxal 5'-phosphate</name>
        <dbReference type="ChEBI" id="CHEBI:597326"/>
    </ligand>
</feature>
<feature type="binding site" evidence="1">
    <location>
        <begin position="213"/>
        <end position="215"/>
    </location>
    <ligand>
        <name>pyridoxal 5'-phosphate</name>
        <dbReference type="ChEBI" id="CHEBI:597326"/>
    </ligand>
</feature>
<feature type="modified residue" description="N6-(pyridoxal phosphate)lysine" evidence="1">
    <location>
        <position position="216"/>
    </location>
</feature>
<proteinExistence type="inferred from homology"/>
<reference key="1">
    <citation type="journal article" date="2009" name="Stand. Genomic Sci.">
        <title>Complete genome sequence of Methanocorpusculum labreanum type strain Z.</title>
        <authorList>
            <person name="Anderson I.J."/>
            <person name="Sieprawska-Lupa M."/>
            <person name="Goltsman E."/>
            <person name="Lapidus A."/>
            <person name="Copeland A."/>
            <person name="Glavina Del Rio T."/>
            <person name="Tice H."/>
            <person name="Dalin E."/>
            <person name="Barry K."/>
            <person name="Pitluck S."/>
            <person name="Hauser L."/>
            <person name="Land M."/>
            <person name="Lucas S."/>
            <person name="Richardson P."/>
            <person name="Whitman W.B."/>
            <person name="Kyrpides N.C."/>
        </authorList>
    </citation>
    <scope>NUCLEOTIDE SEQUENCE [LARGE SCALE GENOMIC DNA]</scope>
    <source>
        <strain>ATCC 43576 / DSM 4855 / Z</strain>
    </source>
</reference>
<protein>
    <recommendedName>
        <fullName evidence="1">O-phospho-L-seryl-tRNA:Cys-tRNA synthase 2</fullName>
        <ecNumber evidence="1">2.5.1.73</ecNumber>
    </recommendedName>
    <alternativeName>
        <fullName evidence="1">Sep-tRNA:Cys-tRNA synthase 2</fullName>
        <shortName evidence="1">SepCysS 2</shortName>
    </alternativeName>
</protein>